<reference key="1">
    <citation type="submission" date="2008-12" db="EMBL/GenBank/DDBJ databases">
        <title>Complete sequence of Chloroflexus aggregans DSM 9485.</title>
        <authorList>
            <consortium name="US DOE Joint Genome Institute"/>
            <person name="Lucas S."/>
            <person name="Copeland A."/>
            <person name="Lapidus A."/>
            <person name="Glavina del Rio T."/>
            <person name="Dalin E."/>
            <person name="Tice H."/>
            <person name="Pitluck S."/>
            <person name="Foster B."/>
            <person name="Larimer F."/>
            <person name="Land M."/>
            <person name="Hauser L."/>
            <person name="Kyrpides N."/>
            <person name="Mikhailova N."/>
            <person name="Bryant D.A."/>
            <person name="Richardson P."/>
        </authorList>
    </citation>
    <scope>NUCLEOTIDE SEQUENCE [LARGE SCALE GENOMIC DNA]</scope>
    <source>
        <strain>MD-66 / DSM 9485</strain>
    </source>
</reference>
<accession>B8G5S6</accession>
<evidence type="ECO:0000255" key="1">
    <source>
        <dbReference type="HAMAP-Rule" id="MF_00016"/>
    </source>
</evidence>
<comment type="function">
    <text evidence="1">The RuvA-RuvB-RuvC complex processes Holliday junction (HJ) DNA during genetic recombination and DNA repair, while the RuvA-RuvB complex plays an important role in the rescue of blocked DNA replication forks via replication fork reversal (RFR). RuvA specifically binds to HJ cruciform DNA, conferring on it an open structure. The RuvB hexamer acts as an ATP-dependent pump, pulling dsDNA into and through the RuvAB complex. RuvB forms 2 homohexamers on either side of HJ DNA bound by 1 or 2 RuvA tetramers; 4 subunits per hexamer contact DNA at a time. Coordinated motions by a converter formed by DNA-disengaged RuvB subunits stimulates ATP hydrolysis and nucleotide exchange. Immobilization of the converter enables RuvB to convert the ATP-contained energy into a lever motion, pulling 2 nucleotides of DNA out of the RuvA tetramer per ATP hydrolyzed, thus driving DNA branch migration. The RuvB motors rotate together with the DNA substrate, which together with the progressing nucleotide cycle form the mechanistic basis for DNA recombination by continuous HJ branch migration. Branch migration allows RuvC to scan DNA until it finds its consensus sequence, where it cleaves and resolves cruciform DNA.</text>
</comment>
<comment type="catalytic activity">
    <reaction evidence="1">
        <text>ATP + H2O = ADP + phosphate + H(+)</text>
        <dbReference type="Rhea" id="RHEA:13065"/>
        <dbReference type="ChEBI" id="CHEBI:15377"/>
        <dbReference type="ChEBI" id="CHEBI:15378"/>
        <dbReference type="ChEBI" id="CHEBI:30616"/>
        <dbReference type="ChEBI" id="CHEBI:43474"/>
        <dbReference type="ChEBI" id="CHEBI:456216"/>
    </reaction>
</comment>
<comment type="subunit">
    <text evidence="1">Homohexamer. Forms an RuvA(8)-RuvB(12)-Holliday junction (HJ) complex. HJ DNA is sandwiched between 2 RuvA tetramers; dsDNA enters through RuvA and exits via RuvB. An RuvB hexamer assembles on each DNA strand where it exits the tetramer. Each RuvB hexamer is contacted by two RuvA subunits (via domain III) on 2 adjacent RuvB subunits; this complex drives branch migration. In the full resolvosome a probable DNA-RuvA(4)-RuvB(12)-RuvC(2) complex forms which resolves the HJ.</text>
</comment>
<comment type="subcellular location">
    <subcellularLocation>
        <location evidence="1">Cytoplasm</location>
    </subcellularLocation>
</comment>
<comment type="domain">
    <text evidence="1">Has 3 domains, the large (RuvB-L) and small ATPase (RuvB-S) domains and the C-terminal head (RuvB-H) domain. The head domain binds DNA, while the ATPase domains jointly bind ATP, ADP or are empty depending on the state of the subunit in the translocation cycle. During a single DNA translocation step the structure of each domain remains the same, but their relative positions change.</text>
</comment>
<comment type="similarity">
    <text evidence="1">Belongs to the RuvB family.</text>
</comment>
<sequence length="350" mass="38469">MSAERLVNPHSDSDDQQVEKSLRPRTLSEFIGQEKVVEQLRIAIAAARGRNEALDHTLFYGPPGLGKTSLANVVANEMGAKIKITSGPAIERAGDLAAILTNLQPNDVLFIDEVHRLNRAVEEVLYPAMEDFALDLVVGKGPGARSLRLNLPRFTVIGATTRLALLTSPLRDRFVAVHRLVFYSDAAMTEIVSRSARILGVPISPEGAREIGRRARGTPRIANRILRRVRDYAQVVANGEITLAVAREALAQLEIDELGLDENDRRLLRAIIELFNGGPVGLNTLAAALAEEVDAIEDVYEPFLLQLGFLQRTPRGRVATRRAYEHLGLPFPERSLPLEDESGPQQGTLF</sequence>
<dbReference type="EC" id="3.6.4.-" evidence="1"/>
<dbReference type="EMBL" id="CP001337">
    <property type="protein sequence ID" value="ACL23787.1"/>
    <property type="molecule type" value="Genomic_DNA"/>
</dbReference>
<dbReference type="RefSeq" id="WP_012616153.1">
    <property type="nucleotide sequence ID" value="NC_011831.1"/>
</dbReference>
<dbReference type="SMR" id="B8G5S6"/>
<dbReference type="STRING" id="326427.Cagg_0868"/>
<dbReference type="KEGG" id="cag:Cagg_0868"/>
<dbReference type="eggNOG" id="COG2255">
    <property type="taxonomic scope" value="Bacteria"/>
</dbReference>
<dbReference type="HOGENOM" id="CLU_055599_1_0_0"/>
<dbReference type="OrthoDB" id="9804478at2"/>
<dbReference type="Proteomes" id="UP000002508">
    <property type="component" value="Chromosome"/>
</dbReference>
<dbReference type="GO" id="GO:0005737">
    <property type="term" value="C:cytoplasm"/>
    <property type="evidence" value="ECO:0007669"/>
    <property type="project" value="UniProtKB-SubCell"/>
</dbReference>
<dbReference type="GO" id="GO:0048476">
    <property type="term" value="C:Holliday junction resolvase complex"/>
    <property type="evidence" value="ECO:0007669"/>
    <property type="project" value="UniProtKB-UniRule"/>
</dbReference>
<dbReference type="GO" id="GO:0005524">
    <property type="term" value="F:ATP binding"/>
    <property type="evidence" value="ECO:0007669"/>
    <property type="project" value="UniProtKB-UniRule"/>
</dbReference>
<dbReference type="GO" id="GO:0016887">
    <property type="term" value="F:ATP hydrolysis activity"/>
    <property type="evidence" value="ECO:0007669"/>
    <property type="project" value="InterPro"/>
</dbReference>
<dbReference type="GO" id="GO:0000400">
    <property type="term" value="F:four-way junction DNA binding"/>
    <property type="evidence" value="ECO:0007669"/>
    <property type="project" value="UniProtKB-UniRule"/>
</dbReference>
<dbReference type="GO" id="GO:0009378">
    <property type="term" value="F:four-way junction helicase activity"/>
    <property type="evidence" value="ECO:0007669"/>
    <property type="project" value="InterPro"/>
</dbReference>
<dbReference type="GO" id="GO:0006310">
    <property type="term" value="P:DNA recombination"/>
    <property type="evidence" value="ECO:0007669"/>
    <property type="project" value="UniProtKB-UniRule"/>
</dbReference>
<dbReference type="GO" id="GO:0006281">
    <property type="term" value="P:DNA repair"/>
    <property type="evidence" value="ECO:0007669"/>
    <property type="project" value="UniProtKB-UniRule"/>
</dbReference>
<dbReference type="CDD" id="cd00009">
    <property type="entry name" value="AAA"/>
    <property type="match status" value="1"/>
</dbReference>
<dbReference type="Gene3D" id="1.10.8.60">
    <property type="match status" value="1"/>
</dbReference>
<dbReference type="Gene3D" id="3.40.50.300">
    <property type="entry name" value="P-loop containing nucleotide triphosphate hydrolases"/>
    <property type="match status" value="1"/>
</dbReference>
<dbReference type="Gene3D" id="1.10.10.10">
    <property type="entry name" value="Winged helix-like DNA-binding domain superfamily/Winged helix DNA-binding domain"/>
    <property type="match status" value="1"/>
</dbReference>
<dbReference type="HAMAP" id="MF_00016">
    <property type="entry name" value="DNA_HJ_migration_RuvB"/>
    <property type="match status" value="1"/>
</dbReference>
<dbReference type="InterPro" id="IPR003593">
    <property type="entry name" value="AAA+_ATPase"/>
</dbReference>
<dbReference type="InterPro" id="IPR041445">
    <property type="entry name" value="AAA_lid_4"/>
</dbReference>
<dbReference type="InterPro" id="IPR004605">
    <property type="entry name" value="DNA_helicase_Holl-junc_RuvB"/>
</dbReference>
<dbReference type="InterPro" id="IPR027417">
    <property type="entry name" value="P-loop_NTPase"/>
</dbReference>
<dbReference type="InterPro" id="IPR008824">
    <property type="entry name" value="RuvB-like_N"/>
</dbReference>
<dbReference type="InterPro" id="IPR008823">
    <property type="entry name" value="RuvB_C"/>
</dbReference>
<dbReference type="InterPro" id="IPR036388">
    <property type="entry name" value="WH-like_DNA-bd_sf"/>
</dbReference>
<dbReference type="InterPro" id="IPR036390">
    <property type="entry name" value="WH_DNA-bd_sf"/>
</dbReference>
<dbReference type="NCBIfam" id="NF000868">
    <property type="entry name" value="PRK00080.1"/>
    <property type="match status" value="1"/>
</dbReference>
<dbReference type="NCBIfam" id="TIGR00635">
    <property type="entry name" value="ruvB"/>
    <property type="match status" value="1"/>
</dbReference>
<dbReference type="PANTHER" id="PTHR42848">
    <property type="match status" value="1"/>
</dbReference>
<dbReference type="PANTHER" id="PTHR42848:SF1">
    <property type="entry name" value="HOLLIDAY JUNCTION BRANCH MIGRATION COMPLEX SUBUNIT RUVB"/>
    <property type="match status" value="1"/>
</dbReference>
<dbReference type="Pfam" id="PF17864">
    <property type="entry name" value="AAA_lid_4"/>
    <property type="match status" value="1"/>
</dbReference>
<dbReference type="Pfam" id="PF05491">
    <property type="entry name" value="RuvB_C"/>
    <property type="match status" value="1"/>
</dbReference>
<dbReference type="Pfam" id="PF05496">
    <property type="entry name" value="RuvB_N"/>
    <property type="match status" value="1"/>
</dbReference>
<dbReference type="PRINTS" id="PR00830">
    <property type="entry name" value="ENDOLAPTASE"/>
</dbReference>
<dbReference type="SMART" id="SM00382">
    <property type="entry name" value="AAA"/>
    <property type="match status" value="1"/>
</dbReference>
<dbReference type="SUPFAM" id="SSF52540">
    <property type="entry name" value="P-loop containing nucleoside triphosphate hydrolases"/>
    <property type="match status" value="1"/>
</dbReference>
<dbReference type="SUPFAM" id="SSF46785">
    <property type="entry name" value="Winged helix' DNA-binding domain"/>
    <property type="match status" value="1"/>
</dbReference>
<feature type="chain" id="PRO_1000195210" description="Holliday junction branch migration complex subunit RuvB">
    <location>
        <begin position="1"/>
        <end position="350"/>
    </location>
</feature>
<feature type="region of interest" description="Large ATPase domain (RuvB-L)" evidence="1">
    <location>
        <begin position="1"/>
        <end position="183"/>
    </location>
</feature>
<feature type="region of interest" description="Small ATPAse domain (RuvB-S)" evidence="1">
    <location>
        <begin position="184"/>
        <end position="254"/>
    </location>
</feature>
<feature type="region of interest" description="Head domain (RuvB-H)" evidence="1">
    <location>
        <begin position="257"/>
        <end position="350"/>
    </location>
</feature>
<feature type="binding site" evidence="1">
    <location>
        <position position="22"/>
    </location>
    <ligand>
        <name>ATP</name>
        <dbReference type="ChEBI" id="CHEBI:30616"/>
    </ligand>
</feature>
<feature type="binding site" evidence="1">
    <location>
        <position position="23"/>
    </location>
    <ligand>
        <name>ATP</name>
        <dbReference type="ChEBI" id="CHEBI:30616"/>
    </ligand>
</feature>
<feature type="binding site" evidence="1">
    <location>
        <position position="64"/>
    </location>
    <ligand>
        <name>ATP</name>
        <dbReference type="ChEBI" id="CHEBI:30616"/>
    </ligand>
</feature>
<feature type="binding site" evidence="1">
    <location>
        <position position="67"/>
    </location>
    <ligand>
        <name>ATP</name>
        <dbReference type="ChEBI" id="CHEBI:30616"/>
    </ligand>
</feature>
<feature type="binding site" evidence="1">
    <location>
        <position position="68"/>
    </location>
    <ligand>
        <name>ATP</name>
        <dbReference type="ChEBI" id="CHEBI:30616"/>
    </ligand>
</feature>
<feature type="binding site" evidence="1">
    <location>
        <position position="68"/>
    </location>
    <ligand>
        <name>Mg(2+)</name>
        <dbReference type="ChEBI" id="CHEBI:18420"/>
    </ligand>
</feature>
<feature type="binding site" evidence="1">
    <location>
        <position position="69"/>
    </location>
    <ligand>
        <name>ATP</name>
        <dbReference type="ChEBI" id="CHEBI:30616"/>
    </ligand>
</feature>
<feature type="binding site" evidence="1">
    <location>
        <begin position="130"/>
        <end position="132"/>
    </location>
    <ligand>
        <name>ATP</name>
        <dbReference type="ChEBI" id="CHEBI:30616"/>
    </ligand>
</feature>
<feature type="binding site" evidence="1">
    <location>
        <position position="173"/>
    </location>
    <ligand>
        <name>ATP</name>
        <dbReference type="ChEBI" id="CHEBI:30616"/>
    </ligand>
</feature>
<feature type="binding site" evidence="1">
    <location>
        <position position="183"/>
    </location>
    <ligand>
        <name>ATP</name>
        <dbReference type="ChEBI" id="CHEBI:30616"/>
    </ligand>
</feature>
<feature type="binding site" evidence="1">
    <location>
        <position position="220"/>
    </location>
    <ligand>
        <name>ATP</name>
        <dbReference type="ChEBI" id="CHEBI:30616"/>
    </ligand>
</feature>
<feature type="binding site" evidence="1">
    <location>
        <position position="312"/>
    </location>
    <ligand>
        <name>DNA</name>
        <dbReference type="ChEBI" id="CHEBI:16991"/>
    </ligand>
</feature>
<feature type="binding site" evidence="1">
    <location>
        <position position="317"/>
    </location>
    <ligand>
        <name>DNA</name>
        <dbReference type="ChEBI" id="CHEBI:16991"/>
    </ligand>
</feature>
<proteinExistence type="inferred from homology"/>
<organism>
    <name type="scientific">Chloroflexus aggregans (strain MD-66 / DSM 9485)</name>
    <dbReference type="NCBI Taxonomy" id="326427"/>
    <lineage>
        <taxon>Bacteria</taxon>
        <taxon>Bacillati</taxon>
        <taxon>Chloroflexota</taxon>
        <taxon>Chloroflexia</taxon>
        <taxon>Chloroflexales</taxon>
        <taxon>Chloroflexineae</taxon>
        <taxon>Chloroflexaceae</taxon>
        <taxon>Chloroflexus</taxon>
    </lineage>
</organism>
<protein>
    <recommendedName>
        <fullName evidence="1">Holliday junction branch migration complex subunit RuvB</fullName>
        <ecNumber evidence="1">3.6.4.-</ecNumber>
    </recommendedName>
</protein>
<keyword id="KW-0067">ATP-binding</keyword>
<keyword id="KW-0963">Cytoplasm</keyword>
<keyword id="KW-0227">DNA damage</keyword>
<keyword id="KW-0233">DNA recombination</keyword>
<keyword id="KW-0234">DNA repair</keyword>
<keyword id="KW-0238">DNA-binding</keyword>
<keyword id="KW-0378">Hydrolase</keyword>
<keyword id="KW-0547">Nucleotide-binding</keyword>
<gene>
    <name evidence="1" type="primary">ruvB</name>
    <name type="ordered locus">Cagg_0868</name>
</gene>
<name>RUVB_CHLAD</name>